<proteinExistence type="evidence at protein level"/>
<name>HBA_CHAMP</name>
<gene>
    <name type="primary">HBA</name>
</gene>
<feature type="chain" id="PRO_0000052597" description="Hemoglobin subunit alpha">
    <location>
        <begin position="1"/>
        <end position="141"/>
    </location>
</feature>
<feature type="peptide" id="PRO_0000455857" description="Hemopressin" evidence="2">
    <location>
        <begin position="95"/>
        <end position="103"/>
    </location>
</feature>
<feature type="domain" description="Globin" evidence="4">
    <location>
        <begin position="1"/>
        <end position="141"/>
    </location>
</feature>
<feature type="binding site" evidence="4">
    <location>
        <position position="58"/>
    </location>
    <ligand>
        <name>O2</name>
        <dbReference type="ChEBI" id="CHEBI:15379"/>
    </ligand>
</feature>
<feature type="binding site" description="proximal binding residue" evidence="4">
    <location>
        <position position="87"/>
    </location>
    <ligand>
        <name>heme b</name>
        <dbReference type="ChEBI" id="CHEBI:60344"/>
    </ligand>
    <ligandPart>
        <name>Fe</name>
        <dbReference type="ChEBI" id="CHEBI:18248"/>
    </ligandPart>
</feature>
<feature type="modified residue" description="Phosphoserine" evidence="3">
    <location>
        <position position="3"/>
    </location>
</feature>
<feature type="modified residue" description="N6-succinyllysine" evidence="1">
    <location>
        <position position="7"/>
    </location>
</feature>
<feature type="modified residue" description="N6-succinyllysine" evidence="1">
    <location>
        <position position="11"/>
    </location>
</feature>
<feature type="modified residue" description="N6-acetyllysine; alternate" evidence="3">
    <location>
        <position position="16"/>
    </location>
</feature>
<feature type="modified residue" description="N6-succinyllysine; alternate" evidence="1">
    <location>
        <position position="16"/>
    </location>
</feature>
<feature type="modified residue" description="Phosphotyrosine" evidence="3">
    <location>
        <position position="24"/>
    </location>
</feature>
<feature type="modified residue" description="Phosphoserine" evidence="3">
    <location>
        <position position="35"/>
    </location>
</feature>
<feature type="modified residue" description="N6-succinyllysine" evidence="1">
    <location>
        <position position="40"/>
    </location>
</feature>
<feature type="modified residue" description="Phosphoserine" evidence="3">
    <location>
        <position position="49"/>
    </location>
</feature>
<feature type="modified residue" description="Phosphoserine" evidence="1">
    <location>
        <position position="102"/>
    </location>
</feature>
<feature type="modified residue" description="Phosphothreonine" evidence="1">
    <location>
        <position position="108"/>
    </location>
</feature>
<feature type="modified residue" description="Phosphoserine" evidence="1">
    <location>
        <position position="124"/>
    </location>
</feature>
<feature type="modified residue" description="Phosphothreonine" evidence="1">
    <location>
        <position position="134"/>
    </location>
</feature>
<feature type="modified residue" description="Phosphoserine" evidence="1">
    <location>
        <position position="138"/>
    </location>
</feature>
<accession>Q7M2Y4</accession>
<reference key="1">
    <citation type="journal article" date="1995" name="Biol. Chem. Hoppe-Seyler">
        <title>The primary structure of the hemoglobin from the lobe-lipped bat (Chalinolobus morio, microchiroptera).</title>
        <authorList>
            <person name="Singer G.A.M."/>
            <person name="Kleinschmidt T."/>
            <person name="Braunitzer G."/>
        </authorList>
    </citation>
    <scope>PROTEIN SEQUENCE</scope>
</reference>
<organism>
    <name type="scientific">Chalinolobus morio</name>
    <name type="common">Chocolate-wattled bat</name>
    <name type="synonym">Lobe-lipped bat</name>
    <dbReference type="NCBI Taxonomy" id="50353"/>
    <lineage>
        <taxon>Eukaryota</taxon>
        <taxon>Metazoa</taxon>
        <taxon>Chordata</taxon>
        <taxon>Craniata</taxon>
        <taxon>Vertebrata</taxon>
        <taxon>Euteleostomi</taxon>
        <taxon>Mammalia</taxon>
        <taxon>Eutheria</taxon>
        <taxon>Laurasiatheria</taxon>
        <taxon>Chiroptera</taxon>
        <taxon>Yangochiroptera</taxon>
        <taxon>Vespertilionidae</taxon>
        <taxon>Chalinolobus</taxon>
    </lineage>
</organism>
<protein>
    <recommendedName>
        <fullName>Hemoglobin subunit alpha</fullName>
    </recommendedName>
    <alternativeName>
        <fullName>Alpha-globin</fullName>
    </alternativeName>
    <alternativeName>
        <fullName>Hemoglobin alpha chain</fullName>
    </alternativeName>
    <component>
        <recommendedName>
            <fullName evidence="2">Hemopressin</fullName>
        </recommendedName>
    </component>
</protein>
<keyword id="KW-0007">Acetylation</keyword>
<keyword id="KW-0903">Direct protein sequencing</keyword>
<keyword id="KW-0349">Heme</keyword>
<keyword id="KW-0408">Iron</keyword>
<keyword id="KW-0479">Metal-binding</keyword>
<keyword id="KW-0561">Oxygen transport</keyword>
<keyword id="KW-0597">Phosphoprotein</keyword>
<keyword id="KW-0813">Transport</keyword>
<sequence length="141" mass="15069">VLSPADKSNVKAAWDKVGGSAGDYGAEALERMFLSFPTTKTYFPHFDLSHGSAQVKGHGKKVGDALGNAVAHLDDLPGALSALSDLHAHKLRVDPVNFKLLSHCLLVTVACHHPNDFTPAVHASLDKFLANVSTVLVSKYR</sequence>
<evidence type="ECO:0000250" key="1">
    <source>
        <dbReference type="UniProtKB" id="P01942"/>
    </source>
</evidence>
<evidence type="ECO:0000250" key="2">
    <source>
        <dbReference type="UniProtKB" id="P01946"/>
    </source>
</evidence>
<evidence type="ECO:0000250" key="3">
    <source>
        <dbReference type="UniProtKB" id="P69905"/>
    </source>
</evidence>
<evidence type="ECO:0000255" key="4">
    <source>
        <dbReference type="PROSITE-ProRule" id="PRU00238"/>
    </source>
</evidence>
<comment type="function">
    <text>Involved in oxygen transport from the lung to the various peripheral tissues.</text>
</comment>
<comment type="function">
    <molecule>Hemopressin</molecule>
    <text evidence="2">Hemopressin acts as an antagonist peptide of the cannabinoid receptor CNR1. Hemopressin-binding efficiently blocks cannabinoid receptor CNR1 and subsequent signaling.</text>
</comment>
<comment type="subunit">
    <text>Heterotetramer of two alpha chains and two beta chains.</text>
</comment>
<comment type="tissue specificity">
    <text>Red blood cells.</text>
</comment>
<comment type="similarity">
    <text evidence="4">Belongs to the globin family.</text>
</comment>
<dbReference type="PIR" id="S59496">
    <property type="entry name" value="S59496"/>
</dbReference>
<dbReference type="SMR" id="Q7M2Y4"/>
<dbReference type="GO" id="GO:0072562">
    <property type="term" value="C:blood microparticle"/>
    <property type="evidence" value="ECO:0007669"/>
    <property type="project" value="TreeGrafter"/>
</dbReference>
<dbReference type="GO" id="GO:0031838">
    <property type="term" value="C:haptoglobin-hemoglobin complex"/>
    <property type="evidence" value="ECO:0007669"/>
    <property type="project" value="TreeGrafter"/>
</dbReference>
<dbReference type="GO" id="GO:0005833">
    <property type="term" value="C:hemoglobin complex"/>
    <property type="evidence" value="ECO:0007669"/>
    <property type="project" value="InterPro"/>
</dbReference>
<dbReference type="GO" id="GO:0031720">
    <property type="term" value="F:haptoglobin binding"/>
    <property type="evidence" value="ECO:0007669"/>
    <property type="project" value="TreeGrafter"/>
</dbReference>
<dbReference type="GO" id="GO:0020037">
    <property type="term" value="F:heme binding"/>
    <property type="evidence" value="ECO:0007669"/>
    <property type="project" value="InterPro"/>
</dbReference>
<dbReference type="GO" id="GO:0005506">
    <property type="term" value="F:iron ion binding"/>
    <property type="evidence" value="ECO:0007669"/>
    <property type="project" value="InterPro"/>
</dbReference>
<dbReference type="GO" id="GO:0043177">
    <property type="term" value="F:organic acid binding"/>
    <property type="evidence" value="ECO:0007669"/>
    <property type="project" value="TreeGrafter"/>
</dbReference>
<dbReference type="GO" id="GO:0019825">
    <property type="term" value="F:oxygen binding"/>
    <property type="evidence" value="ECO:0007669"/>
    <property type="project" value="InterPro"/>
</dbReference>
<dbReference type="GO" id="GO:0005344">
    <property type="term" value="F:oxygen carrier activity"/>
    <property type="evidence" value="ECO:0007669"/>
    <property type="project" value="UniProtKB-KW"/>
</dbReference>
<dbReference type="GO" id="GO:0004601">
    <property type="term" value="F:peroxidase activity"/>
    <property type="evidence" value="ECO:0007669"/>
    <property type="project" value="TreeGrafter"/>
</dbReference>
<dbReference type="GO" id="GO:0042744">
    <property type="term" value="P:hydrogen peroxide catabolic process"/>
    <property type="evidence" value="ECO:0007669"/>
    <property type="project" value="TreeGrafter"/>
</dbReference>
<dbReference type="CDD" id="cd08927">
    <property type="entry name" value="Hb-alpha-like"/>
    <property type="match status" value="1"/>
</dbReference>
<dbReference type="FunFam" id="1.10.490.10:FF:000002">
    <property type="entry name" value="Hemoglobin subunit alpha"/>
    <property type="match status" value="1"/>
</dbReference>
<dbReference type="Gene3D" id="1.10.490.10">
    <property type="entry name" value="Globins"/>
    <property type="match status" value="1"/>
</dbReference>
<dbReference type="InterPro" id="IPR000971">
    <property type="entry name" value="Globin"/>
</dbReference>
<dbReference type="InterPro" id="IPR009050">
    <property type="entry name" value="Globin-like_sf"/>
</dbReference>
<dbReference type="InterPro" id="IPR012292">
    <property type="entry name" value="Globin/Proto"/>
</dbReference>
<dbReference type="InterPro" id="IPR002338">
    <property type="entry name" value="Hemoglobin_a-typ"/>
</dbReference>
<dbReference type="InterPro" id="IPR050056">
    <property type="entry name" value="Hemoglobin_oxygen_transport"/>
</dbReference>
<dbReference type="InterPro" id="IPR002339">
    <property type="entry name" value="Hemoglobin_pi"/>
</dbReference>
<dbReference type="PANTHER" id="PTHR11442">
    <property type="entry name" value="HEMOGLOBIN FAMILY MEMBER"/>
    <property type="match status" value="1"/>
</dbReference>
<dbReference type="PANTHER" id="PTHR11442:SF48">
    <property type="entry name" value="HEMOGLOBIN SUBUNIT ALPHA"/>
    <property type="match status" value="1"/>
</dbReference>
<dbReference type="Pfam" id="PF00042">
    <property type="entry name" value="Globin"/>
    <property type="match status" value="1"/>
</dbReference>
<dbReference type="PRINTS" id="PR00612">
    <property type="entry name" value="ALPHAHAEM"/>
</dbReference>
<dbReference type="PRINTS" id="PR00815">
    <property type="entry name" value="PIHAEM"/>
</dbReference>
<dbReference type="SUPFAM" id="SSF46458">
    <property type="entry name" value="Globin-like"/>
    <property type="match status" value="1"/>
</dbReference>
<dbReference type="PROSITE" id="PS01033">
    <property type="entry name" value="GLOBIN"/>
    <property type="match status" value="1"/>
</dbReference>